<proteinExistence type="inferred from homology"/>
<keyword id="KW-0004">4Fe-4S</keyword>
<keyword id="KW-0963">Cytoplasm</keyword>
<keyword id="KW-0408">Iron</keyword>
<keyword id="KW-0411">Iron-sulfur</keyword>
<keyword id="KW-0479">Metal-binding</keyword>
<keyword id="KW-1185">Reference proteome</keyword>
<keyword id="KW-0949">S-adenosyl-L-methionine</keyword>
<keyword id="KW-0808">Transferase</keyword>
<accession>A0R075</accession>
<accession>I7G4T4</accession>
<gene>
    <name evidence="1" type="primary">lipA</name>
    <name type="ordered locus">MSMEG_4286</name>
    <name type="ordered locus">MSMEI_4185</name>
</gene>
<name>LIPA_MYCS2</name>
<protein>
    <recommendedName>
        <fullName evidence="1">Lipoyl synthase</fullName>
        <ecNumber evidence="1">2.8.1.8</ecNumber>
    </recommendedName>
    <alternativeName>
        <fullName evidence="1">Lip-syn</fullName>
        <shortName evidence="1">LS</shortName>
    </alternativeName>
    <alternativeName>
        <fullName evidence="1">Lipoate synthase</fullName>
    </alternativeName>
    <alternativeName>
        <fullName evidence="1">Lipoic acid synthase</fullName>
    </alternativeName>
    <alternativeName>
        <fullName evidence="1">Sulfur insertion protein LipA</fullName>
    </alternativeName>
</protein>
<evidence type="ECO:0000255" key="1">
    <source>
        <dbReference type="HAMAP-Rule" id="MF_00206"/>
    </source>
</evidence>
<evidence type="ECO:0000255" key="2">
    <source>
        <dbReference type="PROSITE-ProRule" id="PRU01266"/>
    </source>
</evidence>
<organism>
    <name type="scientific">Mycolicibacterium smegmatis (strain ATCC 700084 / mc(2)155)</name>
    <name type="common">Mycobacterium smegmatis</name>
    <dbReference type="NCBI Taxonomy" id="246196"/>
    <lineage>
        <taxon>Bacteria</taxon>
        <taxon>Bacillati</taxon>
        <taxon>Actinomycetota</taxon>
        <taxon>Actinomycetes</taxon>
        <taxon>Mycobacteriales</taxon>
        <taxon>Mycobacteriaceae</taxon>
        <taxon>Mycolicibacterium</taxon>
    </lineage>
</organism>
<sequence>MTVVPEGRKLLRLEVRNAQTPIERKPPWIKTRAKMGPEYTELKGLVRREGLHTVCEEAGCPNIFECWEDREATFLIGGEQCTRRCDFCQIDTGKPADLDRDEPRRVAESVQAMGLRYSTVTGVARDDLPDGGAWLYAETVRYIKRLNPNTGVELLIPDFNGNPEQLEEVFESRPEVLAHNVETVPRIFKRIRPAFRYDRSLAVITAARNFGLVTKSNLILGMGETIDEVRTALRDLHDAGCDIITITQYLRPSPRHHPVERWVHPDEFVELSAYAEGLGFAGVLAGPLVRSSYRAGKLYAQAARVRFADQPPVS</sequence>
<comment type="function">
    <text evidence="1">Catalyzes the radical-mediated insertion of two sulfur atoms into the C-6 and C-8 positions of the octanoyl moiety bound to the lipoyl domains of lipoate-dependent enzymes, thereby converting the octanoylated domains into lipoylated derivatives.</text>
</comment>
<comment type="catalytic activity">
    <reaction evidence="1">
        <text>[[Fe-S] cluster scaffold protein carrying a second [4Fe-4S](2+) cluster] + N(6)-octanoyl-L-lysyl-[protein] + 2 oxidized [2Fe-2S]-[ferredoxin] + 2 S-adenosyl-L-methionine + 4 H(+) = [[Fe-S] cluster scaffold protein] + N(6)-[(R)-dihydrolipoyl]-L-lysyl-[protein] + 4 Fe(3+) + 2 hydrogen sulfide + 2 5'-deoxyadenosine + 2 L-methionine + 2 reduced [2Fe-2S]-[ferredoxin]</text>
        <dbReference type="Rhea" id="RHEA:16585"/>
        <dbReference type="Rhea" id="RHEA-COMP:9928"/>
        <dbReference type="Rhea" id="RHEA-COMP:10000"/>
        <dbReference type="Rhea" id="RHEA-COMP:10001"/>
        <dbReference type="Rhea" id="RHEA-COMP:10475"/>
        <dbReference type="Rhea" id="RHEA-COMP:14568"/>
        <dbReference type="Rhea" id="RHEA-COMP:14569"/>
        <dbReference type="ChEBI" id="CHEBI:15378"/>
        <dbReference type="ChEBI" id="CHEBI:17319"/>
        <dbReference type="ChEBI" id="CHEBI:29034"/>
        <dbReference type="ChEBI" id="CHEBI:29919"/>
        <dbReference type="ChEBI" id="CHEBI:33722"/>
        <dbReference type="ChEBI" id="CHEBI:33737"/>
        <dbReference type="ChEBI" id="CHEBI:33738"/>
        <dbReference type="ChEBI" id="CHEBI:57844"/>
        <dbReference type="ChEBI" id="CHEBI:59789"/>
        <dbReference type="ChEBI" id="CHEBI:78809"/>
        <dbReference type="ChEBI" id="CHEBI:83100"/>
        <dbReference type="EC" id="2.8.1.8"/>
    </reaction>
</comment>
<comment type="cofactor">
    <cofactor evidence="1">
        <name>[4Fe-4S] cluster</name>
        <dbReference type="ChEBI" id="CHEBI:49883"/>
    </cofactor>
    <text evidence="1">Binds 2 [4Fe-4S] clusters per subunit. One cluster is coordinated with 3 cysteines and an exchangeable S-adenosyl-L-methionine.</text>
</comment>
<comment type="pathway">
    <text evidence="1">Protein modification; protein lipoylation via endogenous pathway; protein N(6)-(lipoyl)lysine from octanoyl-[acyl-carrier-protein]: step 2/2.</text>
</comment>
<comment type="subcellular location">
    <subcellularLocation>
        <location evidence="1">Cytoplasm</location>
    </subcellularLocation>
</comment>
<comment type="similarity">
    <text evidence="1">Belongs to the radical SAM superfamily. Lipoyl synthase family.</text>
</comment>
<feature type="chain" id="PRO_0000325278" description="Lipoyl synthase">
    <location>
        <begin position="1"/>
        <end position="314"/>
    </location>
</feature>
<feature type="domain" description="Radical SAM core" evidence="2">
    <location>
        <begin position="67"/>
        <end position="281"/>
    </location>
</feature>
<feature type="binding site" evidence="1">
    <location>
        <position position="55"/>
    </location>
    <ligand>
        <name>[4Fe-4S] cluster</name>
        <dbReference type="ChEBI" id="CHEBI:49883"/>
        <label>1</label>
    </ligand>
</feature>
<feature type="binding site" evidence="1">
    <location>
        <position position="60"/>
    </location>
    <ligand>
        <name>[4Fe-4S] cluster</name>
        <dbReference type="ChEBI" id="CHEBI:49883"/>
        <label>1</label>
    </ligand>
</feature>
<feature type="binding site" evidence="1">
    <location>
        <position position="66"/>
    </location>
    <ligand>
        <name>[4Fe-4S] cluster</name>
        <dbReference type="ChEBI" id="CHEBI:49883"/>
        <label>1</label>
    </ligand>
</feature>
<feature type="binding site" evidence="1">
    <location>
        <position position="81"/>
    </location>
    <ligand>
        <name>[4Fe-4S] cluster</name>
        <dbReference type="ChEBI" id="CHEBI:49883"/>
        <label>2</label>
        <note>4Fe-4S-S-AdoMet</note>
    </ligand>
</feature>
<feature type="binding site" evidence="1">
    <location>
        <position position="85"/>
    </location>
    <ligand>
        <name>[4Fe-4S] cluster</name>
        <dbReference type="ChEBI" id="CHEBI:49883"/>
        <label>2</label>
        <note>4Fe-4S-S-AdoMet</note>
    </ligand>
</feature>
<feature type="binding site" evidence="1">
    <location>
        <position position="88"/>
    </location>
    <ligand>
        <name>[4Fe-4S] cluster</name>
        <dbReference type="ChEBI" id="CHEBI:49883"/>
        <label>2</label>
        <note>4Fe-4S-S-AdoMet</note>
    </ligand>
</feature>
<feature type="binding site" evidence="1">
    <location>
        <position position="292"/>
    </location>
    <ligand>
        <name>[4Fe-4S] cluster</name>
        <dbReference type="ChEBI" id="CHEBI:49883"/>
        <label>1</label>
    </ligand>
</feature>
<dbReference type="EC" id="2.8.1.8" evidence="1"/>
<dbReference type="EMBL" id="CP000480">
    <property type="protein sequence ID" value="ABK75084.1"/>
    <property type="molecule type" value="Genomic_DNA"/>
</dbReference>
<dbReference type="EMBL" id="CP001663">
    <property type="protein sequence ID" value="AFP40642.1"/>
    <property type="molecule type" value="Genomic_DNA"/>
</dbReference>
<dbReference type="RefSeq" id="WP_011729704.1">
    <property type="nucleotide sequence ID" value="NZ_SIJM01000003.1"/>
</dbReference>
<dbReference type="RefSeq" id="YP_888563.1">
    <property type="nucleotide sequence ID" value="NC_008596.1"/>
</dbReference>
<dbReference type="SMR" id="A0R075"/>
<dbReference type="STRING" id="246196.MSMEG_4286"/>
<dbReference type="PaxDb" id="246196-MSMEI_4185"/>
<dbReference type="GeneID" id="93459004"/>
<dbReference type="KEGG" id="msb:LJ00_21245"/>
<dbReference type="KEGG" id="msg:MSMEI_4185"/>
<dbReference type="KEGG" id="msm:MSMEG_4286"/>
<dbReference type="PATRIC" id="fig|246196.19.peg.4206"/>
<dbReference type="eggNOG" id="COG0320">
    <property type="taxonomic scope" value="Bacteria"/>
</dbReference>
<dbReference type="OrthoDB" id="9787898at2"/>
<dbReference type="UniPathway" id="UPA00538">
    <property type="reaction ID" value="UER00593"/>
</dbReference>
<dbReference type="Proteomes" id="UP000000757">
    <property type="component" value="Chromosome"/>
</dbReference>
<dbReference type="Proteomes" id="UP000006158">
    <property type="component" value="Chromosome"/>
</dbReference>
<dbReference type="GO" id="GO:0005737">
    <property type="term" value="C:cytoplasm"/>
    <property type="evidence" value="ECO:0007669"/>
    <property type="project" value="UniProtKB-SubCell"/>
</dbReference>
<dbReference type="GO" id="GO:0051539">
    <property type="term" value="F:4 iron, 4 sulfur cluster binding"/>
    <property type="evidence" value="ECO:0007669"/>
    <property type="project" value="UniProtKB-UniRule"/>
</dbReference>
<dbReference type="GO" id="GO:0016992">
    <property type="term" value="F:lipoate synthase activity"/>
    <property type="evidence" value="ECO:0007669"/>
    <property type="project" value="UniProtKB-UniRule"/>
</dbReference>
<dbReference type="GO" id="GO:0046872">
    <property type="term" value="F:metal ion binding"/>
    <property type="evidence" value="ECO:0007669"/>
    <property type="project" value="UniProtKB-KW"/>
</dbReference>
<dbReference type="CDD" id="cd01335">
    <property type="entry name" value="Radical_SAM"/>
    <property type="match status" value="1"/>
</dbReference>
<dbReference type="FunFam" id="3.20.20.70:FF:000116">
    <property type="entry name" value="Lipoyl synthase"/>
    <property type="match status" value="1"/>
</dbReference>
<dbReference type="Gene3D" id="3.20.20.70">
    <property type="entry name" value="Aldolase class I"/>
    <property type="match status" value="1"/>
</dbReference>
<dbReference type="HAMAP" id="MF_00206">
    <property type="entry name" value="Lipoyl_synth"/>
    <property type="match status" value="1"/>
</dbReference>
<dbReference type="InterPro" id="IPR013785">
    <property type="entry name" value="Aldolase_TIM"/>
</dbReference>
<dbReference type="InterPro" id="IPR006638">
    <property type="entry name" value="Elp3/MiaA/NifB-like_rSAM"/>
</dbReference>
<dbReference type="InterPro" id="IPR031691">
    <property type="entry name" value="LIAS_N"/>
</dbReference>
<dbReference type="InterPro" id="IPR003698">
    <property type="entry name" value="Lipoyl_synth"/>
</dbReference>
<dbReference type="InterPro" id="IPR007197">
    <property type="entry name" value="rSAM"/>
</dbReference>
<dbReference type="NCBIfam" id="TIGR00510">
    <property type="entry name" value="lipA"/>
    <property type="match status" value="1"/>
</dbReference>
<dbReference type="NCBIfam" id="NF004019">
    <property type="entry name" value="PRK05481.1"/>
    <property type="match status" value="1"/>
</dbReference>
<dbReference type="NCBIfam" id="NF009544">
    <property type="entry name" value="PRK12928.1"/>
    <property type="match status" value="1"/>
</dbReference>
<dbReference type="PANTHER" id="PTHR10949">
    <property type="entry name" value="LIPOYL SYNTHASE"/>
    <property type="match status" value="1"/>
</dbReference>
<dbReference type="PANTHER" id="PTHR10949:SF0">
    <property type="entry name" value="LIPOYL SYNTHASE, MITOCHONDRIAL"/>
    <property type="match status" value="1"/>
</dbReference>
<dbReference type="Pfam" id="PF16881">
    <property type="entry name" value="LIAS_N"/>
    <property type="match status" value="1"/>
</dbReference>
<dbReference type="Pfam" id="PF04055">
    <property type="entry name" value="Radical_SAM"/>
    <property type="match status" value="1"/>
</dbReference>
<dbReference type="PIRSF" id="PIRSF005963">
    <property type="entry name" value="Lipoyl_synth"/>
    <property type="match status" value="1"/>
</dbReference>
<dbReference type="SFLD" id="SFLDF00271">
    <property type="entry name" value="lipoyl_synthase"/>
    <property type="match status" value="1"/>
</dbReference>
<dbReference type="SFLD" id="SFLDS00029">
    <property type="entry name" value="Radical_SAM"/>
    <property type="match status" value="1"/>
</dbReference>
<dbReference type="SMART" id="SM00729">
    <property type="entry name" value="Elp3"/>
    <property type="match status" value="1"/>
</dbReference>
<dbReference type="SUPFAM" id="SSF102114">
    <property type="entry name" value="Radical SAM enzymes"/>
    <property type="match status" value="1"/>
</dbReference>
<dbReference type="PROSITE" id="PS51918">
    <property type="entry name" value="RADICAL_SAM"/>
    <property type="match status" value="1"/>
</dbReference>
<reference key="1">
    <citation type="submission" date="2006-10" db="EMBL/GenBank/DDBJ databases">
        <authorList>
            <person name="Fleischmann R.D."/>
            <person name="Dodson R.J."/>
            <person name="Haft D.H."/>
            <person name="Merkel J.S."/>
            <person name="Nelson W.C."/>
            <person name="Fraser C.M."/>
        </authorList>
    </citation>
    <scope>NUCLEOTIDE SEQUENCE [LARGE SCALE GENOMIC DNA]</scope>
    <source>
        <strain>ATCC 700084 / mc(2)155</strain>
    </source>
</reference>
<reference key="2">
    <citation type="journal article" date="2007" name="Genome Biol.">
        <title>Interrupted coding sequences in Mycobacterium smegmatis: authentic mutations or sequencing errors?</title>
        <authorList>
            <person name="Deshayes C."/>
            <person name="Perrodou E."/>
            <person name="Gallien S."/>
            <person name="Euphrasie D."/>
            <person name="Schaeffer C."/>
            <person name="Van-Dorsselaer A."/>
            <person name="Poch O."/>
            <person name="Lecompte O."/>
            <person name="Reyrat J.-M."/>
        </authorList>
    </citation>
    <scope>NUCLEOTIDE SEQUENCE [LARGE SCALE GENOMIC DNA]</scope>
    <source>
        <strain>ATCC 700084 / mc(2)155</strain>
    </source>
</reference>
<reference key="3">
    <citation type="journal article" date="2009" name="Genome Res.">
        <title>Ortho-proteogenomics: multiple proteomes investigation through orthology and a new MS-based protocol.</title>
        <authorList>
            <person name="Gallien S."/>
            <person name="Perrodou E."/>
            <person name="Carapito C."/>
            <person name="Deshayes C."/>
            <person name="Reyrat J.-M."/>
            <person name="Van Dorsselaer A."/>
            <person name="Poch O."/>
            <person name="Schaeffer C."/>
            <person name="Lecompte O."/>
        </authorList>
    </citation>
    <scope>NUCLEOTIDE SEQUENCE [LARGE SCALE GENOMIC DNA]</scope>
    <source>
        <strain>ATCC 700084 / mc(2)155</strain>
    </source>
</reference>